<organism>
    <name type="scientific">Yersinia pestis</name>
    <dbReference type="NCBI Taxonomy" id="632"/>
    <lineage>
        <taxon>Bacteria</taxon>
        <taxon>Pseudomonadati</taxon>
        <taxon>Pseudomonadota</taxon>
        <taxon>Gammaproteobacteria</taxon>
        <taxon>Enterobacterales</taxon>
        <taxon>Yersiniaceae</taxon>
        <taxon>Yersinia</taxon>
    </lineage>
</organism>
<keyword id="KW-0067">ATP-binding</keyword>
<keyword id="KW-0997">Cell inner membrane</keyword>
<keyword id="KW-1003">Cell membrane</keyword>
<keyword id="KW-0472">Membrane</keyword>
<keyword id="KW-0500">Molybdenum</keyword>
<keyword id="KW-0547">Nucleotide-binding</keyword>
<keyword id="KW-1185">Reference proteome</keyword>
<keyword id="KW-1278">Translocase</keyword>
<keyword id="KW-0813">Transport</keyword>
<name>MODC_YERPE</name>
<reference key="1">
    <citation type="journal article" date="2001" name="Nature">
        <title>Genome sequence of Yersinia pestis, the causative agent of plague.</title>
        <authorList>
            <person name="Parkhill J."/>
            <person name="Wren B.W."/>
            <person name="Thomson N.R."/>
            <person name="Titball R.W."/>
            <person name="Holden M.T.G."/>
            <person name="Prentice M.B."/>
            <person name="Sebaihia M."/>
            <person name="James K.D."/>
            <person name="Churcher C.M."/>
            <person name="Mungall K.L."/>
            <person name="Baker S."/>
            <person name="Basham D."/>
            <person name="Bentley S.D."/>
            <person name="Brooks K."/>
            <person name="Cerdeno-Tarraga A.-M."/>
            <person name="Chillingworth T."/>
            <person name="Cronin A."/>
            <person name="Davies R.M."/>
            <person name="Davis P."/>
            <person name="Dougan G."/>
            <person name="Feltwell T."/>
            <person name="Hamlin N."/>
            <person name="Holroyd S."/>
            <person name="Jagels K."/>
            <person name="Karlyshev A.V."/>
            <person name="Leather S."/>
            <person name="Moule S."/>
            <person name="Oyston P.C.F."/>
            <person name="Quail M.A."/>
            <person name="Rutherford K.M."/>
            <person name="Simmonds M."/>
            <person name="Skelton J."/>
            <person name="Stevens K."/>
            <person name="Whitehead S."/>
            <person name="Barrell B.G."/>
        </authorList>
    </citation>
    <scope>NUCLEOTIDE SEQUENCE [LARGE SCALE GENOMIC DNA]</scope>
    <source>
        <strain>CO-92 / Biovar Orientalis</strain>
    </source>
</reference>
<reference key="2">
    <citation type="journal article" date="2002" name="J. Bacteriol.">
        <title>Genome sequence of Yersinia pestis KIM.</title>
        <authorList>
            <person name="Deng W."/>
            <person name="Burland V."/>
            <person name="Plunkett G. III"/>
            <person name="Boutin A."/>
            <person name="Mayhew G.F."/>
            <person name="Liss P."/>
            <person name="Perna N.T."/>
            <person name="Rose D.J."/>
            <person name="Mau B."/>
            <person name="Zhou S."/>
            <person name="Schwartz D.C."/>
            <person name="Fetherston J.D."/>
            <person name="Lindler L.E."/>
            <person name="Brubaker R.R."/>
            <person name="Plano G.V."/>
            <person name="Straley S.C."/>
            <person name="McDonough K.A."/>
            <person name="Nilles M.L."/>
            <person name="Matson J.S."/>
            <person name="Blattner F.R."/>
            <person name="Perry R.D."/>
        </authorList>
    </citation>
    <scope>NUCLEOTIDE SEQUENCE [LARGE SCALE GENOMIC DNA]</scope>
    <source>
        <strain>KIM10+ / Biovar Mediaevalis</strain>
    </source>
</reference>
<reference key="3">
    <citation type="journal article" date="2004" name="DNA Res.">
        <title>Complete genome sequence of Yersinia pestis strain 91001, an isolate avirulent to humans.</title>
        <authorList>
            <person name="Song Y."/>
            <person name="Tong Z."/>
            <person name="Wang J."/>
            <person name="Wang L."/>
            <person name="Guo Z."/>
            <person name="Han Y."/>
            <person name="Zhang J."/>
            <person name="Pei D."/>
            <person name="Zhou D."/>
            <person name="Qin H."/>
            <person name="Pang X."/>
            <person name="Han Y."/>
            <person name="Zhai J."/>
            <person name="Li M."/>
            <person name="Cui B."/>
            <person name="Qi Z."/>
            <person name="Jin L."/>
            <person name="Dai R."/>
            <person name="Chen F."/>
            <person name="Li S."/>
            <person name="Ye C."/>
            <person name="Du Z."/>
            <person name="Lin W."/>
            <person name="Wang J."/>
            <person name="Yu J."/>
            <person name="Yang H."/>
            <person name="Wang J."/>
            <person name="Huang P."/>
            <person name="Yang R."/>
        </authorList>
    </citation>
    <scope>NUCLEOTIDE SEQUENCE [LARGE SCALE GENOMIC DNA]</scope>
    <source>
        <strain>91001 / Biovar Mediaevalis</strain>
    </source>
</reference>
<protein>
    <recommendedName>
        <fullName evidence="1">Molybdenum import ATP-binding protein ModC</fullName>
        <ecNumber evidence="1">7.3.2.5</ecNumber>
    </recommendedName>
</protein>
<feature type="chain" id="PRO_0000092563" description="Molybdenum import ATP-binding protein ModC">
    <location>
        <begin position="1"/>
        <end position="359"/>
    </location>
</feature>
<feature type="domain" description="ABC transporter" evidence="1">
    <location>
        <begin position="1"/>
        <end position="229"/>
    </location>
</feature>
<feature type="domain" description="Mop" evidence="2">
    <location>
        <begin position="289"/>
        <end position="354"/>
    </location>
</feature>
<feature type="binding site" evidence="1">
    <location>
        <begin position="31"/>
        <end position="38"/>
    </location>
    <ligand>
        <name>ATP</name>
        <dbReference type="ChEBI" id="CHEBI:30616"/>
    </ligand>
</feature>
<accession>Q8ZGX6</accession>
<accession>Q0WHQ2</accession>
<accession>Q74W76</accession>
<accession>Q7CH62</accession>
<evidence type="ECO:0000255" key="1">
    <source>
        <dbReference type="HAMAP-Rule" id="MF_01705"/>
    </source>
</evidence>
<evidence type="ECO:0000255" key="2">
    <source>
        <dbReference type="PROSITE-ProRule" id="PRU01213"/>
    </source>
</evidence>
<sequence length="359" mass="39693">MLELNFSQQLGDLHLQVATDLPAQGITAIFGLSGAGKTSLINVIGGLTRPQQGRVILNGRVLVDAEKNIYLPPEKRRVGYVFQDARLFPHYRVRGNLQYGMAASMRGQFDAIVGLLGIEPLLNRFPFTLSGGEKQRVAIGRALLTAPELLLMDEPLASLDLPRKRELLPYLERLAQDVNTPILYVSHSMDEILRLADQVVVMDAGKVRAVGGLEEVWASSALRPWLQREEPSSILRVSVIGHHDRYAMTALALGDQRLWVGKLDAAEGNSMRIRINAADVSLALQPPHSSSIRNILPVKVAECLDVDGQVDVKLAIGEQWLWARITPWARDELGLKPGQWVYAQIKSVSFNRQNGPVPD</sequence>
<gene>
    <name evidence="1" type="primary">modC</name>
    <name type="synonym">chlD</name>
    <name type="synonym">narD</name>
    <name type="ordered locus">YPO1147</name>
    <name type="ordered locus">y3035</name>
    <name type="ordered locus">YP_1013</name>
</gene>
<dbReference type="EC" id="7.3.2.5" evidence="1"/>
<dbReference type="EMBL" id="AL590842">
    <property type="protein sequence ID" value="CAL19811.1"/>
    <property type="molecule type" value="Genomic_DNA"/>
</dbReference>
<dbReference type="EMBL" id="AE009952">
    <property type="protein sequence ID" value="AAM86586.1"/>
    <property type="molecule type" value="Genomic_DNA"/>
</dbReference>
<dbReference type="EMBL" id="AE017042">
    <property type="protein sequence ID" value="AAS61264.1"/>
    <property type="molecule type" value="Genomic_DNA"/>
</dbReference>
<dbReference type="PIR" id="AI0140">
    <property type="entry name" value="AI0140"/>
</dbReference>
<dbReference type="RefSeq" id="WP_002210758.1">
    <property type="nucleotide sequence ID" value="NZ_WUCM01000016.1"/>
</dbReference>
<dbReference type="RefSeq" id="YP_002346186.1">
    <property type="nucleotide sequence ID" value="NC_003143.1"/>
</dbReference>
<dbReference type="SMR" id="Q8ZGX6"/>
<dbReference type="STRING" id="214092.YPO1147"/>
<dbReference type="PaxDb" id="214092-YPO1147"/>
<dbReference type="DNASU" id="1147982"/>
<dbReference type="EnsemblBacteria" id="AAS61264">
    <property type="protein sequence ID" value="AAS61264"/>
    <property type="gene ID" value="YP_1013"/>
</dbReference>
<dbReference type="GeneID" id="57977286"/>
<dbReference type="KEGG" id="ype:YPO1147"/>
<dbReference type="KEGG" id="ypk:y3035"/>
<dbReference type="KEGG" id="ypm:YP_1013"/>
<dbReference type="PATRIC" id="fig|214092.21.peg.1442"/>
<dbReference type="eggNOG" id="COG4148">
    <property type="taxonomic scope" value="Bacteria"/>
</dbReference>
<dbReference type="HOGENOM" id="CLU_000604_1_1_6"/>
<dbReference type="OMA" id="QWLYAQI"/>
<dbReference type="OrthoDB" id="9802264at2"/>
<dbReference type="Proteomes" id="UP000000815">
    <property type="component" value="Chromosome"/>
</dbReference>
<dbReference type="Proteomes" id="UP000001019">
    <property type="component" value="Chromosome"/>
</dbReference>
<dbReference type="Proteomes" id="UP000002490">
    <property type="component" value="Chromosome"/>
</dbReference>
<dbReference type="GO" id="GO:0005886">
    <property type="term" value="C:plasma membrane"/>
    <property type="evidence" value="ECO:0007669"/>
    <property type="project" value="UniProtKB-SubCell"/>
</dbReference>
<dbReference type="GO" id="GO:0015412">
    <property type="term" value="F:ABC-type molybdate transporter activity"/>
    <property type="evidence" value="ECO:0007669"/>
    <property type="project" value="UniProtKB-EC"/>
</dbReference>
<dbReference type="GO" id="GO:0005524">
    <property type="term" value="F:ATP binding"/>
    <property type="evidence" value="ECO:0007669"/>
    <property type="project" value="UniProtKB-KW"/>
</dbReference>
<dbReference type="GO" id="GO:0016887">
    <property type="term" value="F:ATP hydrolysis activity"/>
    <property type="evidence" value="ECO:0007669"/>
    <property type="project" value="InterPro"/>
</dbReference>
<dbReference type="FunFam" id="3.40.50.300:FF:000634">
    <property type="entry name" value="Molybdenum import ATP-binding protein ModC"/>
    <property type="match status" value="1"/>
</dbReference>
<dbReference type="Gene3D" id="2.40.50.100">
    <property type="match status" value="1"/>
</dbReference>
<dbReference type="Gene3D" id="3.40.50.300">
    <property type="entry name" value="P-loop containing nucleotide triphosphate hydrolases"/>
    <property type="match status" value="1"/>
</dbReference>
<dbReference type="InterPro" id="IPR003593">
    <property type="entry name" value="AAA+_ATPase"/>
</dbReference>
<dbReference type="InterPro" id="IPR003439">
    <property type="entry name" value="ABC_transporter-like_ATP-bd"/>
</dbReference>
<dbReference type="InterPro" id="IPR017871">
    <property type="entry name" value="ABC_transporter-like_CS"/>
</dbReference>
<dbReference type="InterPro" id="IPR008995">
    <property type="entry name" value="Mo/tungstate-bd_C_term_dom"/>
</dbReference>
<dbReference type="InterPro" id="IPR011868">
    <property type="entry name" value="ModC_ABC_ATP-bd"/>
</dbReference>
<dbReference type="InterPro" id="IPR050334">
    <property type="entry name" value="Molybdenum_import_ModC"/>
</dbReference>
<dbReference type="InterPro" id="IPR004606">
    <property type="entry name" value="Mop_domain"/>
</dbReference>
<dbReference type="InterPro" id="IPR027417">
    <property type="entry name" value="P-loop_NTPase"/>
</dbReference>
<dbReference type="InterPro" id="IPR005116">
    <property type="entry name" value="Transp-assoc_OB_typ1"/>
</dbReference>
<dbReference type="NCBIfam" id="TIGR02142">
    <property type="entry name" value="modC_ABC"/>
    <property type="match status" value="1"/>
</dbReference>
<dbReference type="NCBIfam" id="TIGR00638">
    <property type="entry name" value="Mop"/>
    <property type="match status" value="1"/>
</dbReference>
<dbReference type="NCBIfam" id="NF008355">
    <property type="entry name" value="PRK11144.1"/>
    <property type="match status" value="1"/>
</dbReference>
<dbReference type="PANTHER" id="PTHR43514">
    <property type="entry name" value="ABC TRANSPORTER I FAMILY MEMBER 10"/>
    <property type="match status" value="1"/>
</dbReference>
<dbReference type="PANTHER" id="PTHR43514:SF4">
    <property type="entry name" value="ABC TRANSPORTER I FAMILY MEMBER 10"/>
    <property type="match status" value="1"/>
</dbReference>
<dbReference type="Pfam" id="PF00005">
    <property type="entry name" value="ABC_tran"/>
    <property type="match status" value="1"/>
</dbReference>
<dbReference type="Pfam" id="PF03459">
    <property type="entry name" value="TOBE"/>
    <property type="match status" value="1"/>
</dbReference>
<dbReference type="SMART" id="SM00382">
    <property type="entry name" value="AAA"/>
    <property type="match status" value="1"/>
</dbReference>
<dbReference type="SUPFAM" id="SSF50331">
    <property type="entry name" value="MOP-like"/>
    <property type="match status" value="1"/>
</dbReference>
<dbReference type="SUPFAM" id="SSF52540">
    <property type="entry name" value="P-loop containing nucleoside triphosphate hydrolases"/>
    <property type="match status" value="1"/>
</dbReference>
<dbReference type="PROSITE" id="PS00211">
    <property type="entry name" value="ABC_TRANSPORTER_1"/>
    <property type="match status" value="1"/>
</dbReference>
<dbReference type="PROSITE" id="PS50893">
    <property type="entry name" value="ABC_TRANSPORTER_2"/>
    <property type="match status" value="1"/>
</dbReference>
<dbReference type="PROSITE" id="PS51241">
    <property type="entry name" value="MODC"/>
    <property type="match status" value="1"/>
</dbReference>
<dbReference type="PROSITE" id="PS51866">
    <property type="entry name" value="MOP"/>
    <property type="match status" value="1"/>
</dbReference>
<comment type="function">
    <text evidence="1">Part of the ABC transporter complex ModABC involved in molybdenum import. Responsible for energy coupling to the transport system.</text>
</comment>
<comment type="catalytic activity">
    <reaction evidence="1">
        <text>molybdate(out) + ATP + H2O = molybdate(in) + ADP + phosphate + H(+)</text>
        <dbReference type="Rhea" id="RHEA:22020"/>
        <dbReference type="ChEBI" id="CHEBI:15377"/>
        <dbReference type="ChEBI" id="CHEBI:15378"/>
        <dbReference type="ChEBI" id="CHEBI:30616"/>
        <dbReference type="ChEBI" id="CHEBI:36264"/>
        <dbReference type="ChEBI" id="CHEBI:43474"/>
        <dbReference type="ChEBI" id="CHEBI:456216"/>
        <dbReference type="EC" id="7.3.2.5"/>
    </reaction>
</comment>
<comment type="subunit">
    <text evidence="1">The complex is composed of two ATP-binding proteins (ModC), two transmembrane proteins (ModB) and a solute-binding protein (ModA).</text>
</comment>
<comment type="subcellular location">
    <subcellularLocation>
        <location evidence="1">Cell inner membrane</location>
        <topology evidence="1">Peripheral membrane protein</topology>
    </subcellularLocation>
</comment>
<comment type="similarity">
    <text evidence="1">Belongs to the ABC transporter superfamily. Molybdate importer (TC 3.A.1.8) family.</text>
</comment>
<proteinExistence type="inferred from homology"/>